<gene>
    <name type="primary">tmem117</name>
    <name type="ORF">zgc:55574</name>
</gene>
<sequence length="401" mass="47573">MSSQSLHDCLRGRCLGVLRRMEIIGRFRYYFQHPWSRLLVSYLVTFFNFLIFAEDPVSHSQKEAHMSVVGNCFSFIISKYPAGFWSVLKVLLWVLAIICGLIAGKFIFHRRLFGRVLRLKMFREDHGSWMTMFFSTILSLFIFSHIYNLLLLMSVRMRPYMVTEYMGIRNESFMKMAAVGTWMGDFVTAWMVTDMMLQDTHYPDWGRTARHLWRQGHNRIVLFWTVLICLTSVVVLVISTDWIRWDNLNRGFLPSDEVSRAFLASFILVFDLLIVMQDWEFPHFMGDLDMNLPGLSTTQLKIRLPVCKRIFKEEYHIHITGKWFNYGIIFLVLILDLNMWKNQIFYKPYEYGQYVGPGEKIYTVEDPDTLQDFNRSMLTWEWRSTNIDPRTNQTFNQSNAI</sequence>
<feature type="chain" id="PRO_0000360402" description="Transmembrane protein 117">
    <location>
        <begin position="1"/>
        <end position="401"/>
    </location>
</feature>
<feature type="topological domain" description="Cytoplasmic" evidence="1">
    <location>
        <begin position="1"/>
        <end position="37"/>
    </location>
</feature>
<feature type="transmembrane region" description="Helical" evidence="2">
    <location>
        <begin position="38"/>
        <end position="58"/>
    </location>
</feature>
<feature type="topological domain" description="Extracellular" evidence="1">
    <location>
        <begin position="59"/>
        <end position="81"/>
    </location>
</feature>
<feature type="transmembrane region" description="Helical" evidence="2">
    <location>
        <begin position="82"/>
        <end position="102"/>
    </location>
</feature>
<feature type="topological domain" description="Cytoplasmic" evidence="1">
    <location>
        <begin position="103"/>
        <end position="131"/>
    </location>
</feature>
<feature type="transmembrane region" description="Helical" evidence="2">
    <location>
        <begin position="132"/>
        <end position="152"/>
    </location>
</feature>
<feature type="topological domain" description="Extracellular" evidence="1">
    <location>
        <begin position="153"/>
        <end position="176"/>
    </location>
</feature>
<feature type="transmembrane region" description="Helical" evidence="2">
    <location>
        <begin position="177"/>
        <end position="197"/>
    </location>
</feature>
<feature type="topological domain" description="Cytoplasmic" evidence="1">
    <location>
        <begin position="198"/>
        <end position="219"/>
    </location>
</feature>
<feature type="transmembrane region" description="Helical" evidence="2">
    <location>
        <begin position="220"/>
        <end position="240"/>
    </location>
</feature>
<feature type="topological domain" description="Extracellular" evidence="1">
    <location>
        <begin position="241"/>
        <end position="260"/>
    </location>
</feature>
<feature type="transmembrane region" description="Helical" evidence="2">
    <location>
        <begin position="261"/>
        <end position="281"/>
    </location>
</feature>
<feature type="topological domain" description="Cytoplasmic" evidence="1">
    <location>
        <begin position="282"/>
        <end position="316"/>
    </location>
</feature>
<feature type="transmembrane region" description="Helical" evidence="2">
    <location>
        <begin position="317"/>
        <end position="337"/>
    </location>
</feature>
<feature type="topological domain" description="Extracellular" evidence="1">
    <location>
        <begin position="338"/>
        <end position="401"/>
    </location>
</feature>
<feature type="glycosylation site" description="N-linked (GlcNAc...) asparagine" evidence="2">
    <location>
        <position position="170"/>
    </location>
</feature>
<feature type="glycosylation site" description="N-linked (GlcNAc...) asparagine" evidence="2">
    <location>
        <position position="374"/>
    </location>
</feature>
<feature type="glycosylation site" description="N-linked (GlcNAc...) asparagine" evidence="2">
    <location>
        <position position="392"/>
    </location>
</feature>
<feature type="glycosylation site" description="N-linked (GlcNAc...) asparagine" evidence="2">
    <location>
        <position position="396"/>
    </location>
</feature>
<organism>
    <name type="scientific">Danio rerio</name>
    <name type="common">Zebrafish</name>
    <name type="synonym">Brachydanio rerio</name>
    <dbReference type="NCBI Taxonomy" id="7955"/>
    <lineage>
        <taxon>Eukaryota</taxon>
        <taxon>Metazoa</taxon>
        <taxon>Chordata</taxon>
        <taxon>Craniata</taxon>
        <taxon>Vertebrata</taxon>
        <taxon>Euteleostomi</taxon>
        <taxon>Actinopterygii</taxon>
        <taxon>Neopterygii</taxon>
        <taxon>Teleostei</taxon>
        <taxon>Ostariophysi</taxon>
        <taxon>Cypriniformes</taxon>
        <taxon>Danionidae</taxon>
        <taxon>Danioninae</taxon>
        <taxon>Danio</taxon>
    </lineage>
</organism>
<protein>
    <recommendedName>
        <fullName>Transmembrane protein 117</fullName>
    </recommendedName>
</protein>
<proteinExistence type="evidence at transcript level"/>
<keyword id="KW-1003">Cell membrane</keyword>
<keyword id="KW-0325">Glycoprotein</keyword>
<keyword id="KW-0472">Membrane</keyword>
<keyword id="KW-1185">Reference proteome</keyword>
<keyword id="KW-0812">Transmembrane</keyword>
<keyword id="KW-1133">Transmembrane helix</keyword>
<accession>Q7ZVW1</accession>
<dbReference type="EMBL" id="BC045388">
    <property type="protein sequence ID" value="AAH45388.1"/>
    <property type="molecule type" value="mRNA"/>
</dbReference>
<dbReference type="RefSeq" id="NP_998619.1">
    <property type="nucleotide sequence ID" value="NM_213454.1"/>
</dbReference>
<dbReference type="FunCoup" id="Q7ZVW1">
    <property type="interactions" value="579"/>
</dbReference>
<dbReference type="STRING" id="7955.ENSDARP00000105155"/>
<dbReference type="GlyCosmos" id="Q7ZVW1">
    <property type="glycosylation" value="4 sites, No reported glycans"/>
</dbReference>
<dbReference type="PaxDb" id="7955-ENSDARP00000112036"/>
<dbReference type="GeneID" id="406763"/>
<dbReference type="KEGG" id="dre:406763"/>
<dbReference type="AGR" id="ZFIN:ZDB-GENE-040426-2809"/>
<dbReference type="CTD" id="84216"/>
<dbReference type="ZFIN" id="ZDB-GENE-040426-2809">
    <property type="gene designation" value="tmem117"/>
</dbReference>
<dbReference type="eggNOG" id="ENOG502QXR1">
    <property type="taxonomic scope" value="Eukaryota"/>
</dbReference>
<dbReference type="InParanoid" id="Q7ZVW1"/>
<dbReference type="OrthoDB" id="419441at2759"/>
<dbReference type="PhylomeDB" id="Q7ZVW1"/>
<dbReference type="PRO" id="PR:Q7ZVW1"/>
<dbReference type="Proteomes" id="UP000000437">
    <property type="component" value="Chromosome 25"/>
</dbReference>
<dbReference type="GO" id="GO:0005886">
    <property type="term" value="C:plasma membrane"/>
    <property type="evidence" value="ECO:0000250"/>
    <property type="project" value="UniProtKB"/>
</dbReference>
<dbReference type="GO" id="GO:0070059">
    <property type="term" value="P:intrinsic apoptotic signaling pathway in response to endoplasmic reticulum stress"/>
    <property type="evidence" value="ECO:0000250"/>
    <property type="project" value="UniProtKB"/>
</dbReference>
<dbReference type="InterPro" id="IPR029370">
    <property type="entry name" value="TMEM117"/>
</dbReference>
<dbReference type="PANTHER" id="PTHR31226">
    <property type="entry name" value="TRANSMEMBRANE PROTEIN 117"/>
    <property type="match status" value="1"/>
</dbReference>
<dbReference type="PANTHER" id="PTHR31226:SF1">
    <property type="entry name" value="TRANSMEMBRANE PROTEIN 117"/>
    <property type="match status" value="1"/>
</dbReference>
<dbReference type="Pfam" id="PF15113">
    <property type="entry name" value="TMEM117"/>
    <property type="match status" value="1"/>
</dbReference>
<evidence type="ECO:0000250" key="1">
    <source>
        <dbReference type="UniProtKB" id="Q9H0C3"/>
    </source>
</evidence>
<evidence type="ECO:0000255" key="2"/>
<evidence type="ECO:0000305" key="3"/>
<comment type="function">
    <text evidence="1">May be involved in endoplasmic reticulum (ER) stress-induced cell death pathway.</text>
</comment>
<comment type="subcellular location">
    <subcellularLocation>
        <location evidence="1">Cell membrane</location>
        <topology evidence="2">Multi-pass membrane protein</topology>
    </subcellularLocation>
</comment>
<comment type="similarity">
    <text evidence="3">Belongs to the TMEM117 family.</text>
</comment>
<comment type="caution">
    <text evidence="3">It is uncertain whether Met-1 or Met-21 is the initiator.</text>
</comment>
<reference key="1">
    <citation type="submission" date="2003-01" db="EMBL/GenBank/DDBJ databases">
        <authorList>
            <consortium name="NIH - Zebrafish Gene Collection (ZGC) project"/>
        </authorList>
    </citation>
    <scope>NUCLEOTIDE SEQUENCE [LARGE SCALE MRNA]</scope>
    <source>
        <strain>AB</strain>
    </source>
</reference>
<name>TM117_DANRE</name>